<reference key="1">
    <citation type="journal article" date="2006" name="Genome Biol.">
        <title>Genomic analysis reveals that Pseudomonas aeruginosa virulence is combinatorial.</title>
        <authorList>
            <person name="Lee D.G."/>
            <person name="Urbach J.M."/>
            <person name="Wu G."/>
            <person name="Liberati N.T."/>
            <person name="Feinbaum R.L."/>
            <person name="Miyata S."/>
            <person name="Diggins L.T."/>
            <person name="He J."/>
            <person name="Saucier M."/>
            <person name="Deziel E."/>
            <person name="Friedman L."/>
            <person name="Li L."/>
            <person name="Grills G."/>
            <person name="Montgomery K."/>
            <person name="Kucherlapati R."/>
            <person name="Rahme L.G."/>
            <person name="Ausubel F.M."/>
        </authorList>
    </citation>
    <scope>NUCLEOTIDE SEQUENCE [LARGE SCALE GENOMIC DNA]</scope>
    <source>
        <strain>UCBPP-PA14</strain>
    </source>
</reference>
<proteinExistence type="inferred from homology"/>
<protein>
    <recommendedName>
        <fullName evidence="1">Octanoyltransferase</fullName>
        <ecNumber evidence="1">2.3.1.181</ecNumber>
    </recommendedName>
    <alternativeName>
        <fullName evidence="1">Lipoate-protein ligase B</fullName>
    </alternativeName>
    <alternativeName>
        <fullName evidence="1">Lipoyl/octanoyl transferase</fullName>
    </alternativeName>
    <alternativeName>
        <fullName evidence="1">Octanoyl-[acyl-carrier-protein]-protein N-octanoyltransferase</fullName>
    </alternativeName>
</protein>
<accession>Q02SG4</accession>
<dbReference type="EC" id="2.3.1.181" evidence="1"/>
<dbReference type="EMBL" id="CP000438">
    <property type="protein sequence ID" value="ABJ13271.1"/>
    <property type="molecule type" value="Genomic_DNA"/>
</dbReference>
<dbReference type="RefSeq" id="WP_003093177.1">
    <property type="nucleotide sequence ID" value="NZ_CP034244.1"/>
</dbReference>
<dbReference type="SMR" id="Q02SG4"/>
<dbReference type="GeneID" id="77219458"/>
<dbReference type="KEGG" id="pau:PA14_12120"/>
<dbReference type="PseudoCAP" id="PA14_12120"/>
<dbReference type="HOGENOM" id="CLU_035168_3_1_6"/>
<dbReference type="BioCyc" id="PAER208963:G1G74-1007-MONOMER"/>
<dbReference type="UniPathway" id="UPA00538">
    <property type="reaction ID" value="UER00592"/>
</dbReference>
<dbReference type="Proteomes" id="UP000000653">
    <property type="component" value="Chromosome"/>
</dbReference>
<dbReference type="GO" id="GO:0005737">
    <property type="term" value="C:cytoplasm"/>
    <property type="evidence" value="ECO:0007669"/>
    <property type="project" value="UniProtKB-SubCell"/>
</dbReference>
<dbReference type="GO" id="GO:0033819">
    <property type="term" value="F:lipoyl(octanoyl) transferase activity"/>
    <property type="evidence" value="ECO:0007669"/>
    <property type="project" value="UniProtKB-EC"/>
</dbReference>
<dbReference type="GO" id="GO:0036211">
    <property type="term" value="P:protein modification process"/>
    <property type="evidence" value="ECO:0007669"/>
    <property type="project" value="InterPro"/>
</dbReference>
<dbReference type="CDD" id="cd16444">
    <property type="entry name" value="LipB"/>
    <property type="match status" value="1"/>
</dbReference>
<dbReference type="FunFam" id="3.30.930.10:FF:000020">
    <property type="entry name" value="Octanoyltransferase"/>
    <property type="match status" value="1"/>
</dbReference>
<dbReference type="Gene3D" id="3.30.930.10">
    <property type="entry name" value="Bira Bifunctional Protein, Domain 2"/>
    <property type="match status" value="1"/>
</dbReference>
<dbReference type="HAMAP" id="MF_00013">
    <property type="entry name" value="LipB"/>
    <property type="match status" value="1"/>
</dbReference>
<dbReference type="InterPro" id="IPR045864">
    <property type="entry name" value="aa-tRNA-synth_II/BPL/LPL"/>
</dbReference>
<dbReference type="InterPro" id="IPR004143">
    <property type="entry name" value="BPL_LPL_catalytic"/>
</dbReference>
<dbReference type="InterPro" id="IPR000544">
    <property type="entry name" value="Octanoyltransferase"/>
</dbReference>
<dbReference type="InterPro" id="IPR020605">
    <property type="entry name" value="Octanoyltransferase_CS"/>
</dbReference>
<dbReference type="NCBIfam" id="TIGR00214">
    <property type="entry name" value="lipB"/>
    <property type="match status" value="1"/>
</dbReference>
<dbReference type="NCBIfam" id="NF010922">
    <property type="entry name" value="PRK14342.1"/>
    <property type="match status" value="1"/>
</dbReference>
<dbReference type="PANTHER" id="PTHR10993:SF7">
    <property type="entry name" value="LIPOYLTRANSFERASE 2, MITOCHONDRIAL-RELATED"/>
    <property type="match status" value="1"/>
</dbReference>
<dbReference type="PANTHER" id="PTHR10993">
    <property type="entry name" value="OCTANOYLTRANSFERASE"/>
    <property type="match status" value="1"/>
</dbReference>
<dbReference type="Pfam" id="PF21948">
    <property type="entry name" value="LplA-B_cat"/>
    <property type="match status" value="1"/>
</dbReference>
<dbReference type="PIRSF" id="PIRSF016262">
    <property type="entry name" value="LPLase"/>
    <property type="match status" value="1"/>
</dbReference>
<dbReference type="SUPFAM" id="SSF55681">
    <property type="entry name" value="Class II aaRS and biotin synthetases"/>
    <property type="match status" value="1"/>
</dbReference>
<dbReference type="PROSITE" id="PS51733">
    <property type="entry name" value="BPL_LPL_CATALYTIC"/>
    <property type="match status" value="1"/>
</dbReference>
<dbReference type="PROSITE" id="PS01313">
    <property type="entry name" value="LIPB"/>
    <property type="match status" value="1"/>
</dbReference>
<gene>
    <name evidence="1" type="primary">lipB</name>
    <name type="ordered locus">PA14_12120</name>
</gene>
<comment type="function">
    <text evidence="1">Catalyzes the transfer of endogenously produced octanoic acid from octanoyl-acyl-carrier-protein onto the lipoyl domains of lipoate-dependent enzymes. Lipoyl-ACP can also act as a substrate although octanoyl-ACP is likely to be the physiological substrate.</text>
</comment>
<comment type="catalytic activity">
    <reaction evidence="1">
        <text>octanoyl-[ACP] + L-lysyl-[protein] = N(6)-octanoyl-L-lysyl-[protein] + holo-[ACP] + H(+)</text>
        <dbReference type="Rhea" id="RHEA:17665"/>
        <dbReference type="Rhea" id="RHEA-COMP:9636"/>
        <dbReference type="Rhea" id="RHEA-COMP:9685"/>
        <dbReference type="Rhea" id="RHEA-COMP:9752"/>
        <dbReference type="Rhea" id="RHEA-COMP:9928"/>
        <dbReference type="ChEBI" id="CHEBI:15378"/>
        <dbReference type="ChEBI" id="CHEBI:29969"/>
        <dbReference type="ChEBI" id="CHEBI:64479"/>
        <dbReference type="ChEBI" id="CHEBI:78463"/>
        <dbReference type="ChEBI" id="CHEBI:78809"/>
        <dbReference type="EC" id="2.3.1.181"/>
    </reaction>
</comment>
<comment type="pathway">
    <text evidence="1">Protein modification; protein lipoylation via endogenous pathway; protein N(6)-(lipoyl)lysine from octanoyl-[acyl-carrier-protein]: step 1/2.</text>
</comment>
<comment type="subcellular location">
    <subcellularLocation>
        <location evidence="1">Cytoplasm</location>
    </subcellularLocation>
</comment>
<comment type="miscellaneous">
    <text evidence="1">In the reaction, the free carboxyl group of octanoic acid is attached via an amide linkage to the epsilon-amino group of a specific lysine residue of lipoyl domains of lipoate-dependent enzymes.</text>
</comment>
<comment type="similarity">
    <text evidence="1">Belongs to the LipB family.</text>
</comment>
<organism>
    <name type="scientific">Pseudomonas aeruginosa (strain UCBPP-PA14)</name>
    <dbReference type="NCBI Taxonomy" id="208963"/>
    <lineage>
        <taxon>Bacteria</taxon>
        <taxon>Pseudomonadati</taxon>
        <taxon>Pseudomonadota</taxon>
        <taxon>Gammaproteobacteria</taxon>
        <taxon>Pseudomonadales</taxon>
        <taxon>Pseudomonadaceae</taxon>
        <taxon>Pseudomonas</taxon>
    </lineage>
</organism>
<evidence type="ECO:0000255" key="1">
    <source>
        <dbReference type="HAMAP-Rule" id="MF_00013"/>
    </source>
</evidence>
<evidence type="ECO:0000255" key="2">
    <source>
        <dbReference type="PROSITE-ProRule" id="PRU01067"/>
    </source>
</evidence>
<feature type="chain" id="PRO_1000001115" description="Octanoyltransferase">
    <location>
        <begin position="1"/>
        <end position="217"/>
    </location>
</feature>
<feature type="domain" description="BPL/LPL catalytic" evidence="2">
    <location>
        <begin position="31"/>
        <end position="206"/>
    </location>
</feature>
<feature type="active site" description="Acyl-thioester intermediate" evidence="1">
    <location>
        <position position="168"/>
    </location>
</feature>
<feature type="binding site" evidence="1">
    <location>
        <begin position="70"/>
        <end position="77"/>
    </location>
    <ligand>
        <name>substrate</name>
    </ligand>
</feature>
<feature type="binding site" evidence="1">
    <location>
        <begin position="137"/>
        <end position="139"/>
    </location>
    <ligand>
        <name>substrate</name>
    </ligand>
</feature>
<feature type="binding site" evidence="1">
    <location>
        <begin position="150"/>
        <end position="152"/>
    </location>
    <ligand>
        <name>substrate</name>
    </ligand>
</feature>
<feature type="site" description="Lowers pKa of active site Cys" evidence="1">
    <location>
        <position position="134"/>
    </location>
</feature>
<name>LIPB_PSEAB</name>
<keyword id="KW-0012">Acyltransferase</keyword>
<keyword id="KW-0963">Cytoplasm</keyword>
<keyword id="KW-0808">Transferase</keyword>
<sequence>MGLELGFRELGEVPYEPTWHAMQRFVAERDKSVMDEAWLLQHPAVFTQGQAGKAEHVLFPGDIPVIQVDRGGQVTYHGPGQLVTYLLLDVRRLGLGVRELVSRIEQSLIGLLASYDVQAVAKPDAPGVYVDGAKIASLGLRIRNGCSFHGLALNLDMDLRPFQRINPCGYAGMPMTQLRDLVGPVDFAEVCTRLRAELVSRLGYAEQKTLTGGIELT</sequence>